<accession>P47091</accession>
<dbReference type="EMBL" id="X87611">
    <property type="protein sequence ID" value="CAA60940.1"/>
    <property type="molecule type" value="Genomic_DNA"/>
</dbReference>
<dbReference type="EMBL" id="Z49517">
    <property type="protein sequence ID" value="CAA89542.1"/>
    <property type="molecule type" value="Genomic_DNA"/>
</dbReference>
<dbReference type="PIR" id="S55206">
    <property type="entry name" value="S55206"/>
</dbReference>
<dbReference type="STRING" id="4932.YJR018W"/>
<dbReference type="PaxDb" id="4932-YJR018W"/>
<dbReference type="EnsemblFungi" id="YJR018W_mRNA">
    <property type="protein sequence ID" value="YJR018W"/>
    <property type="gene ID" value="YJR018W"/>
</dbReference>
<dbReference type="AGR" id="SGD:S000003779"/>
<dbReference type="SGD" id="S000003779">
    <property type="gene designation" value="YJR018W"/>
</dbReference>
<dbReference type="HOGENOM" id="CLU_2051478_0_0_1"/>
<dbReference type="GO" id="GO:0016020">
    <property type="term" value="C:membrane"/>
    <property type="evidence" value="ECO:0007669"/>
    <property type="project" value="UniProtKB-SubCell"/>
</dbReference>
<name>YJY8_YEAST</name>
<evidence type="ECO:0000255" key="1"/>
<evidence type="ECO:0000305" key="2"/>
<evidence type="ECO:0000305" key="3">
    <source>
    </source>
</evidence>
<comment type="subcellular location">
    <subcellularLocation>
        <location evidence="2">Membrane</location>
        <topology evidence="2">Single-pass membrane protein</topology>
    </subcellularLocation>
</comment>
<comment type="caution">
    <text evidence="3">Product of a dubious gene prediction unlikely to encode a functional protein. Because of that it is not part of the S.cerevisiae S288c complete/reference proteome set.</text>
</comment>
<organism>
    <name type="scientific">Saccharomyces cerevisiae (strain ATCC 204508 / S288c)</name>
    <name type="common">Baker's yeast</name>
    <dbReference type="NCBI Taxonomy" id="559292"/>
    <lineage>
        <taxon>Eukaryota</taxon>
        <taxon>Fungi</taxon>
        <taxon>Dikarya</taxon>
        <taxon>Ascomycota</taxon>
        <taxon>Saccharomycotina</taxon>
        <taxon>Saccharomycetes</taxon>
        <taxon>Saccharomycetales</taxon>
        <taxon>Saccharomycetaceae</taxon>
        <taxon>Saccharomyces</taxon>
    </lineage>
</organism>
<keyword id="KW-0472">Membrane</keyword>
<keyword id="KW-0812">Transmembrane</keyword>
<keyword id="KW-1133">Transmembrane helix</keyword>
<proteinExistence type="uncertain"/>
<reference key="1">
    <citation type="journal article" date="1996" name="EMBO J.">
        <title>Complete nucleotide sequence of Saccharomyces cerevisiae chromosome X.</title>
        <authorList>
            <person name="Galibert F."/>
            <person name="Alexandraki D."/>
            <person name="Baur A."/>
            <person name="Boles E."/>
            <person name="Chalwatzis N."/>
            <person name="Chuat J.-C."/>
            <person name="Coster F."/>
            <person name="Cziepluch C."/>
            <person name="de Haan M."/>
            <person name="Domdey H."/>
            <person name="Durand P."/>
            <person name="Entian K.-D."/>
            <person name="Gatius M."/>
            <person name="Goffeau A."/>
            <person name="Grivell L.A."/>
            <person name="Hennemann A."/>
            <person name="Herbert C.J."/>
            <person name="Heumann K."/>
            <person name="Hilger F."/>
            <person name="Hollenberg C.P."/>
            <person name="Huang M.-E."/>
            <person name="Jacq C."/>
            <person name="Jauniaux J.-C."/>
            <person name="Katsoulou C."/>
            <person name="Kirchrath L."/>
            <person name="Kleine K."/>
            <person name="Kordes E."/>
            <person name="Koetter P."/>
            <person name="Liebl S."/>
            <person name="Louis E.J."/>
            <person name="Manus V."/>
            <person name="Mewes H.-W."/>
            <person name="Miosga T."/>
            <person name="Obermaier B."/>
            <person name="Perea J."/>
            <person name="Pohl T.M."/>
            <person name="Portetelle D."/>
            <person name="Pujol A."/>
            <person name="Purnelle B."/>
            <person name="Ramezani Rad M."/>
            <person name="Rasmussen S.W."/>
            <person name="Rose M."/>
            <person name="Rossau R."/>
            <person name="Schaaff-Gerstenschlaeger I."/>
            <person name="Smits P.H.M."/>
            <person name="Scarcez T."/>
            <person name="Soriano N."/>
            <person name="To Van D."/>
            <person name="Tzermia M."/>
            <person name="Van Broekhoven A."/>
            <person name="Vandenbol M."/>
            <person name="Wedler H."/>
            <person name="von Wettstein D."/>
            <person name="Wambutt R."/>
            <person name="Zagulski M."/>
            <person name="Zollner A."/>
            <person name="Karpfinger-Hartl L."/>
        </authorList>
    </citation>
    <scope>NUCLEOTIDE SEQUENCE [LARGE SCALE GENOMIC DNA]</scope>
    <source>
        <strain>ATCC 204508 / S288c</strain>
    </source>
</reference>
<reference key="2">
    <citation type="journal article" date="2014" name="G3 (Bethesda)">
        <title>The reference genome sequence of Saccharomyces cerevisiae: Then and now.</title>
        <authorList>
            <person name="Engel S.R."/>
            <person name="Dietrich F.S."/>
            <person name="Fisk D.G."/>
            <person name="Binkley G."/>
            <person name="Balakrishnan R."/>
            <person name="Costanzo M.C."/>
            <person name="Dwight S.S."/>
            <person name="Hitz B.C."/>
            <person name="Karra K."/>
            <person name="Nash R.S."/>
            <person name="Weng S."/>
            <person name="Wong E.D."/>
            <person name="Lloyd P."/>
            <person name="Skrzypek M.S."/>
            <person name="Miyasato S.R."/>
            <person name="Simison M."/>
            <person name="Cherry J.M."/>
        </authorList>
    </citation>
    <scope>GENOME REANNOTATION</scope>
    <source>
        <strain>ATCC 204508 / S288c</strain>
    </source>
</reference>
<feature type="chain" id="PRO_0000203086" description="Putative uncharacterized protein YJR018W">
    <location>
        <begin position="1"/>
        <end position="120"/>
    </location>
</feature>
<feature type="transmembrane region" description="Helical" evidence="1">
    <location>
        <begin position="93"/>
        <end position="109"/>
    </location>
</feature>
<protein>
    <recommendedName>
        <fullName>Putative uncharacterized protein YJR018W</fullName>
    </recommendedName>
</protein>
<gene>
    <name type="ordered locus">YJR018W</name>
    <name type="ORF">J1454</name>
    <name type="ORF">YJR83.14</name>
</gene>
<sequence>MFSDLCDAGLLESLCLMRMCRHLTRTGWSLKCLCSWSLLVPSGSSHCECFVSGLKKYSLFLDLLYLTVHGVGSPVLDATSDGIGASLWCRSRLCVGISTTMIIQVLFLLRSKGKRYDTRS</sequence>